<organism>
    <name type="scientific">Enhydra lutris</name>
    <name type="common">Sea otter</name>
    <dbReference type="NCBI Taxonomy" id="34882"/>
    <lineage>
        <taxon>Eukaryota</taxon>
        <taxon>Metazoa</taxon>
        <taxon>Chordata</taxon>
        <taxon>Craniata</taxon>
        <taxon>Vertebrata</taxon>
        <taxon>Euteleostomi</taxon>
        <taxon>Mammalia</taxon>
        <taxon>Eutheria</taxon>
        <taxon>Laurasiatheria</taxon>
        <taxon>Carnivora</taxon>
        <taxon>Caniformia</taxon>
        <taxon>Musteloidea</taxon>
        <taxon>Mustelidae</taxon>
        <taxon>Lutrinae</taxon>
        <taxon>Enhydra</taxon>
    </lineage>
</organism>
<name>CYB_ENHLU</name>
<proteinExistence type="inferred from homology"/>
<geneLocation type="mitochondrion"/>
<dbReference type="EMBL" id="AF057120">
    <property type="protein sequence ID" value="AAC33700.1"/>
    <property type="molecule type" value="Genomic_DNA"/>
</dbReference>
<dbReference type="EMBL" id="D26522">
    <property type="protein sequence ID" value="BAA05528.1"/>
    <property type="molecule type" value="Genomic_DNA"/>
</dbReference>
<dbReference type="EMBL" id="U12835">
    <property type="protein sequence ID" value="AAA58590.2"/>
    <property type="molecule type" value="Genomic_DNA"/>
</dbReference>
<dbReference type="RefSeq" id="YP_001382358.1">
    <property type="nucleotide sequence ID" value="NC_009692.1"/>
</dbReference>
<dbReference type="SMR" id="Q37006"/>
<dbReference type="GeneID" id="5333285"/>
<dbReference type="CTD" id="4519"/>
<dbReference type="GO" id="GO:0005743">
    <property type="term" value="C:mitochondrial inner membrane"/>
    <property type="evidence" value="ECO:0007669"/>
    <property type="project" value="UniProtKB-SubCell"/>
</dbReference>
<dbReference type="GO" id="GO:0045275">
    <property type="term" value="C:respiratory chain complex III"/>
    <property type="evidence" value="ECO:0007669"/>
    <property type="project" value="InterPro"/>
</dbReference>
<dbReference type="GO" id="GO:0046872">
    <property type="term" value="F:metal ion binding"/>
    <property type="evidence" value="ECO:0007669"/>
    <property type="project" value="UniProtKB-KW"/>
</dbReference>
<dbReference type="GO" id="GO:0008121">
    <property type="term" value="F:ubiquinol-cytochrome-c reductase activity"/>
    <property type="evidence" value="ECO:0007669"/>
    <property type="project" value="InterPro"/>
</dbReference>
<dbReference type="GO" id="GO:0006122">
    <property type="term" value="P:mitochondrial electron transport, ubiquinol to cytochrome c"/>
    <property type="evidence" value="ECO:0007669"/>
    <property type="project" value="TreeGrafter"/>
</dbReference>
<dbReference type="CDD" id="cd00290">
    <property type="entry name" value="cytochrome_b_C"/>
    <property type="match status" value="1"/>
</dbReference>
<dbReference type="CDD" id="cd00284">
    <property type="entry name" value="Cytochrome_b_N"/>
    <property type="match status" value="1"/>
</dbReference>
<dbReference type="FunFam" id="1.20.810.10:FF:000002">
    <property type="entry name" value="Cytochrome b"/>
    <property type="match status" value="1"/>
</dbReference>
<dbReference type="Gene3D" id="1.20.810.10">
    <property type="entry name" value="Cytochrome Bc1 Complex, Chain C"/>
    <property type="match status" value="1"/>
</dbReference>
<dbReference type="InterPro" id="IPR005798">
    <property type="entry name" value="Cyt_b/b6_C"/>
</dbReference>
<dbReference type="InterPro" id="IPR036150">
    <property type="entry name" value="Cyt_b/b6_C_sf"/>
</dbReference>
<dbReference type="InterPro" id="IPR005797">
    <property type="entry name" value="Cyt_b/b6_N"/>
</dbReference>
<dbReference type="InterPro" id="IPR027387">
    <property type="entry name" value="Cytb/b6-like_sf"/>
</dbReference>
<dbReference type="InterPro" id="IPR030689">
    <property type="entry name" value="Cytochrome_b"/>
</dbReference>
<dbReference type="InterPro" id="IPR048260">
    <property type="entry name" value="Cytochrome_b_C_euk/bac"/>
</dbReference>
<dbReference type="InterPro" id="IPR048259">
    <property type="entry name" value="Cytochrome_b_N_euk/bac"/>
</dbReference>
<dbReference type="InterPro" id="IPR016174">
    <property type="entry name" value="Di-haem_cyt_TM"/>
</dbReference>
<dbReference type="PANTHER" id="PTHR19271">
    <property type="entry name" value="CYTOCHROME B"/>
    <property type="match status" value="1"/>
</dbReference>
<dbReference type="PANTHER" id="PTHR19271:SF16">
    <property type="entry name" value="CYTOCHROME B"/>
    <property type="match status" value="1"/>
</dbReference>
<dbReference type="Pfam" id="PF00032">
    <property type="entry name" value="Cytochrom_B_C"/>
    <property type="match status" value="1"/>
</dbReference>
<dbReference type="Pfam" id="PF00033">
    <property type="entry name" value="Cytochrome_B"/>
    <property type="match status" value="1"/>
</dbReference>
<dbReference type="PIRSF" id="PIRSF038885">
    <property type="entry name" value="COB"/>
    <property type="match status" value="1"/>
</dbReference>
<dbReference type="SUPFAM" id="SSF81648">
    <property type="entry name" value="a domain/subunit of cytochrome bc1 complex (Ubiquinol-cytochrome c reductase)"/>
    <property type="match status" value="1"/>
</dbReference>
<dbReference type="SUPFAM" id="SSF81342">
    <property type="entry name" value="Transmembrane di-heme cytochromes"/>
    <property type="match status" value="1"/>
</dbReference>
<dbReference type="PROSITE" id="PS51003">
    <property type="entry name" value="CYTB_CTER"/>
    <property type="match status" value="1"/>
</dbReference>
<dbReference type="PROSITE" id="PS51002">
    <property type="entry name" value="CYTB_NTER"/>
    <property type="match status" value="1"/>
</dbReference>
<feature type="chain" id="PRO_0000060920" description="Cytochrome b">
    <location>
        <begin position="1"/>
        <end position="379"/>
    </location>
</feature>
<feature type="transmembrane region" description="Helical" evidence="2">
    <location>
        <begin position="33"/>
        <end position="53"/>
    </location>
</feature>
<feature type="transmembrane region" description="Helical" evidence="2">
    <location>
        <begin position="77"/>
        <end position="98"/>
    </location>
</feature>
<feature type="transmembrane region" description="Helical" evidence="2">
    <location>
        <begin position="113"/>
        <end position="133"/>
    </location>
</feature>
<feature type="transmembrane region" description="Helical" evidence="2">
    <location>
        <begin position="178"/>
        <end position="198"/>
    </location>
</feature>
<feature type="transmembrane region" description="Helical" evidence="2">
    <location>
        <begin position="226"/>
        <end position="246"/>
    </location>
</feature>
<feature type="transmembrane region" description="Helical" evidence="2">
    <location>
        <begin position="288"/>
        <end position="308"/>
    </location>
</feature>
<feature type="transmembrane region" description="Helical" evidence="2">
    <location>
        <begin position="320"/>
        <end position="340"/>
    </location>
</feature>
<feature type="transmembrane region" description="Helical" evidence="2">
    <location>
        <begin position="347"/>
        <end position="367"/>
    </location>
</feature>
<feature type="binding site" description="axial binding residue" evidence="2">
    <location>
        <position position="83"/>
    </location>
    <ligand>
        <name>heme b</name>
        <dbReference type="ChEBI" id="CHEBI:60344"/>
        <label>b562</label>
    </ligand>
    <ligandPart>
        <name>Fe</name>
        <dbReference type="ChEBI" id="CHEBI:18248"/>
    </ligandPart>
</feature>
<feature type="binding site" description="axial binding residue" evidence="2">
    <location>
        <position position="97"/>
    </location>
    <ligand>
        <name>heme b</name>
        <dbReference type="ChEBI" id="CHEBI:60344"/>
        <label>b566</label>
    </ligand>
    <ligandPart>
        <name>Fe</name>
        <dbReference type="ChEBI" id="CHEBI:18248"/>
    </ligandPart>
</feature>
<feature type="binding site" description="axial binding residue" evidence="2">
    <location>
        <position position="182"/>
    </location>
    <ligand>
        <name>heme b</name>
        <dbReference type="ChEBI" id="CHEBI:60344"/>
        <label>b562</label>
    </ligand>
    <ligandPart>
        <name>Fe</name>
        <dbReference type="ChEBI" id="CHEBI:18248"/>
    </ligandPart>
</feature>
<feature type="binding site" description="axial binding residue" evidence="2">
    <location>
        <position position="196"/>
    </location>
    <ligand>
        <name>heme b</name>
        <dbReference type="ChEBI" id="CHEBI:60344"/>
        <label>b566</label>
    </ligand>
    <ligandPart>
        <name>Fe</name>
        <dbReference type="ChEBI" id="CHEBI:18248"/>
    </ligandPart>
</feature>
<feature type="binding site" evidence="2">
    <location>
        <position position="201"/>
    </location>
    <ligand>
        <name>a ubiquinone</name>
        <dbReference type="ChEBI" id="CHEBI:16389"/>
    </ligand>
</feature>
<gene>
    <name type="primary">MT-CYB</name>
    <name type="synonym">COB</name>
    <name type="synonym">CYTB</name>
    <name type="synonym">MTCYB</name>
</gene>
<reference key="1">
    <citation type="journal article" date="1998" name="J. Zool. (Lond.)">
        <title>Phylogenetic relationships of otters (Carnivora: Mustelidae) based on mitochondrial cytochrome b sequences.</title>
        <authorList>
            <person name="Koepfli K.-P."/>
            <person name="Wayne R.K."/>
        </authorList>
    </citation>
    <scope>NUCLEOTIDE SEQUENCE [GENOMIC DNA]</scope>
</reference>
<reference key="2">
    <citation type="journal article" date="1994" name="Zool. Sci.">
        <title>A molecular phylogeny of the family Mustelidae (Mammalia, Carnivora), based on comparison of mitochondrial cytochrome b nucleotide sequences.</title>
        <authorList>
            <person name="Masuda R."/>
            <person name="Yoshida M.C."/>
        </authorList>
    </citation>
    <scope>NUCLEOTIDE SEQUENCE [GENOMIC DNA] OF 1-125</scope>
    <source>
        <tissue>Muscle</tissue>
    </source>
</reference>
<reference key="3">
    <citation type="journal article" date="1995" name="Mol. Biol. Evol.">
        <title>Use of spectral analysis to test hypotheses on the origin of pinnipeds.</title>
        <authorList>
            <person name="Lento G.M."/>
            <person name="Hickson R.E."/>
            <person name="Chambers G.K."/>
            <person name="Penny D."/>
        </authorList>
    </citation>
    <scope>NUCLEOTIDE SEQUENCE [GENOMIC DNA] OF 1-125</scope>
</reference>
<protein>
    <recommendedName>
        <fullName>Cytochrome b</fullName>
    </recommendedName>
    <alternativeName>
        <fullName>Complex III subunit 3</fullName>
    </alternativeName>
    <alternativeName>
        <fullName>Complex III subunit III</fullName>
    </alternativeName>
    <alternativeName>
        <fullName>Cytochrome b-c1 complex subunit 3</fullName>
    </alternativeName>
    <alternativeName>
        <fullName>Ubiquinol-cytochrome-c reductase complex cytochrome b subunit</fullName>
    </alternativeName>
</protein>
<keyword id="KW-0249">Electron transport</keyword>
<keyword id="KW-0349">Heme</keyword>
<keyword id="KW-0408">Iron</keyword>
<keyword id="KW-0472">Membrane</keyword>
<keyword id="KW-0479">Metal-binding</keyword>
<keyword id="KW-0496">Mitochondrion</keyword>
<keyword id="KW-0999">Mitochondrion inner membrane</keyword>
<keyword id="KW-0679">Respiratory chain</keyword>
<keyword id="KW-0812">Transmembrane</keyword>
<keyword id="KW-1133">Transmembrane helix</keyword>
<keyword id="KW-0813">Transport</keyword>
<keyword id="KW-0830">Ubiquinone</keyword>
<sequence length="379" mass="42555">MTNIRKTHPLTKIINNSFIDLPAPSNISAWWNFGSLLGICLILQILTGLFLAMHYTSDTTTAFSSVAHICRDVNYGWIIRYMHANGASMFFICLFLHVGRGLYYGSYMFSETWNIGIVLLFTVMATAFMGYVLPWGQMSFWGATVITNLLSAIPYIGTNLVEWIWGGFSVDKATLTRFFAFHFILPFIISALAMIHLLFLHETGSNNPSGIPSNSDKIPFHPYYTIKDILGALSLVLALTTLVLFSPDLLGDPDNYIPANPLSTPPHIKPEWYFLFAYAILRSIPNKLGGVLALILSILILAIIPLLHTSKQRSMMFRPLSQCLFWLLVADLLTLTWIGGQPVEHPFVVIGQLASILYFMILLVLMPITSIIENNLLKW</sequence>
<accession>Q37006</accession>
<evidence type="ECO:0000250" key="1"/>
<evidence type="ECO:0000250" key="2">
    <source>
        <dbReference type="UniProtKB" id="P00157"/>
    </source>
</evidence>
<evidence type="ECO:0000255" key="3">
    <source>
        <dbReference type="PROSITE-ProRule" id="PRU00967"/>
    </source>
</evidence>
<evidence type="ECO:0000255" key="4">
    <source>
        <dbReference type="PROSITE-ProRule" id="PRU00968"/>
    </source>
</evidence>
<comment type="function">
    <text evidence="2">Component of the ubiquinol-cytochrome c reductase complex (complex III or cytochrome b-c1 complex) that is part of the mitochondrial respiratory chain. The b-c1 complex mediates electron transfer from ubiquinol to cytochrome c. Contributes to the generation of a proton gradient across the mitochondrial membrane that is then used for ATP synthesis.</text>
</comment>
<comment type="cofactor">
    <cofactor evidence="2">
        <name>heme b</name>
        <dbReference type="ChEBI" id="CHEBI:60344"/>
    </cofactor>
    <text evidence="2">Binds 2 heme b groups non-covalently.</text>
</comment>
<comment type="subunit">
    <text evidence="2">The cytochrome bc1 complex contains 11 subunits: 3 respiratory subunits (MT-CYB, CYC1 and UQCRFS1), 2 core proteins (UQCRC1 and UQCRC2) and 6 low-molecular weight proteins (UQCRH/QCR6, UQCRB/QCR7, UQCRQ/QCR8, UQCR10/QCR9, UQCR11/QCR10 and a cleavage product of UQCRFS1). This cytochrome bc1 complex then forms a dimer.</text>
</comment>
<comment type="subcellular location">
    <subcellularLocation>
        <location evidence="2">Mitochondrion inner membrane</location>
        <topology evidence="2">Multi-pass membrane protein</topology>
    </subcellularLocation>
</comment>
<comment type="miscellaneous">
    <text evidence="1">Heme 1 (or BL or b562) is low-potential and absorbs at about 562 nm, and heme 2 (or BH or b566) is high-potential and absorbs at about 566 nm.</text>
</comment>
<comment type="similarity">
    <text evidence="3 4">Belongs to the cytochrome b family.</text>
</comment>
<comment type="caution">
    <text evidence="2">The full-length protein contains only eight transmembrane helices, not nine as predicted by bioinformatics tools.</text>
</comment>